<reference key="1">
    <citation type="journal article" date="2005" name="J. Bacteriol.">
        <title>Completion of the genome sequence of Brucella abortus and comparison to the highly similar genomes of Brucella melitensis and Brucella suis.</title>
        <authorList>
            <person name="Halling S.M."/>
            <person name="Peterson-Burch B.D."/>
            <person name="Bricker B.J."/>
            <person name="Zuerner R.L."/>
            <person name="Qing Z."/>
            <person name="Li L.-L."/>
            <person name="Kapur V."/>
            <person name="Alt D.P."/>
            <person name="Olsen S.C."/>
        </authorList>
    </citation>
    <scope>NUCLEOTIDE SEQUENCE [LARGE SCALE GENOMIC DNA]</scope>
    <source>
        <strain>9-941</strain>
    </source>
</reference>
<dbReference type="EMBL" id="AE017223">
    <property type="protein sequence ID" value="AAX74577.1"/>
    <property type="molecule type" value="Genomic_DNA"/>
</dbReference>
<dbReference type="RefSeq" id="WP_002964363.1">
    <property type="nucleotide sequence ID" value="NC_006932.1"/>
</dbReference>
<dbReference type="SMR" id="Q57CQ7"/>
<dbReference type="EnsemblBacteria" id="AAX74577">
    <property type="protein sequence ID" value="AAX74577"/>
    <property type="gene ID" value="BruAb1_1239"/>
</dbReference>
<dbReference type="GeneID" id="97533523"/>
<dbReference type="KEGG" id="bmb:BruAb1_1239"/>
<dbReference type="HOGENOM" id="CLU_122625_1_3_5"/>
<dbReference type="Proteomes" id="UP000000540">
    <property type="component" value="Chromosome I"/>
</dbReference>
<dbReference type="GO" id="GO:1990904">
    <property type="term" value="C:ribonucleoprotein complex"/>
    <property type="evidence" value="ECO:0007669"/>
    <property type="project" value="UniProtKB-KW"/>
</dbReference>
<dbReference type="GO" id="GO:0005840">
    <property type="term" value="C:ribosome"/>
    <property type="evidence" value="ECO:0007669"/>
    <property type="project" value="UniProtKB-KW"/>
</dbReference>
<dbReference type="GO" id="GO:0003735">
    <property type="term" value="F:structural constituent of ribosome"/>
    <property type="evidence" value="ECO:0007669"/>
    <property type="project" value="InterPro"/>
</dbReference>
<dbReference type="GO" id="GO:0000049">
    <property type="term" value="F:tRNA binding"/>
    <property type="evidence" value="ECO:0007669"/>
    <property type="project" value="UniProtKB-UniRule"/>
</dbReference>
<dbReference type="GO" id="GO:0006412">
    <property type="term" value="P:translation"/>
    <property type="evidence" value="ECO:0007669"/>
    <property type="project" value="UniProtKB-UniRule"/>
</dbReference>
<dbReference type="FunFam" id="3.30.70.600:FF:000001">
    <property type="entry name" value="30S ribosomal protein S10"/>
    <property type="match status" value="1"/>
</dbReference>
<dbReference type="Gene3D" id="3.30.70.600">
    <property type="entry name" value="Ribosomal protein S10 domain"/>
    <property type="match status" value="1"/>
</dbReference>
<dbReference type="HAMAP" id="MF_00508">
    <property type="entry name" value="Ribosomal_uS10"/>
    <property type="match status" value="1"/>
</dbReference>
<dbReference type="InterPro" id="IPR001848">
    <property type="entry name" value="Ribosomal_uS10"/>
</dbReference>
<dbReference type="InterPro" id="IPR018268">
    <property type="entry name" value="Ribosomal_uS10_CS"/>
</dbReference>
<dbReference type="InterPro" id="IPR027486">
    <property type="entry name" value="Ribosomal_uS10_dom"/>
</dbReference>
<dbReference type="InterPro" id="IPR036838">
    <property type="entry name" value="Ribosomal_uS10_dom_sf"/>
</dbReference>
<dbReference type="NCBIfam" id="NF001861">
    <property type="entry name" value="PRK00596.1"/>
    <property type="match status" value="1"/>
</dbReference>
<dbReference type="NCBIfam" id="TIGR01049">
    <property type="entry name" value="rpsJ_bact"/>
    <property type="match status" value="1"/>
</dbReference>
<dbReference type="PANTHER" id="PTHR11700">
    <property type="entry name" value="30S RIBOSOMAL PROTEIN S10 FAMILY MEMBER"/>
    <property type="match status" value="1"/>
</dbReference>
<dbReference type="Pfam" id="PF00338">
    <property type="entry name" value="Ribosomal_S10"/>
    <property type="match status" value="1"/>
</dbReference>
<dbReference type="PRINTS" id="PR00971">
    <property type="entry name" value="RIBOSOMALS10"/>
</dbReference>
<dbReference type="SMART" id="SM01403">
    <property type="entry name" value="Ribosomal_S10"/>
    <property type="match status" value="1"/>
</dbReference>
<dbReference type="SUPFAM" id="SSF54999">
    <property type="entry name" value="Ribosomal protein S10"/>
    <property type="match status" value="1"/>
</dbReference>
<dbReference type="PROSITE" id="PS00361">
    <property type="entry name" value="RIBOSOMAL_S10"/>
    <property type="match status" value="1"/>
</dbReference>
<proteinExistence type="inferred from homology"/>
<feature type="chain" id="PRO_0000237021" description="Small ribosomal subunit protein uS10">
    <location>
        <begin position="1"/>
        <end position="102"/>
    </location>
</feature>
<comment type="function">
    <text evidence="1">Involved in the binding of tRNA to the ribosomes.</text>
</comment>
<comment type="subunit">
    <text evidence="1">Part of the 30S ribosomal subunit.</text>
</comment>
<comment type="similarity">
    <text evidence="1">Belongs to the universal ribosomal protein uS10 family.</text>
</comment>
<organism>
    <name type="scientific">Brucella abortus biovar 1 (strain 9-941)</name>
    <dbReference type="NCBI Taxonomy" id="262698"/>
    <lineage>
        <taxon>Bacteria</taxon>
        <taxon>Pseudomonadati</taxon>
        <taxon>Pseudomonadota</taxon>
        <taxon>Alphaproteobacteria</taxon>
        <taxon>Hyphomicrobiales</taxon>
        <taxon>Brucellaceae</taxon>
        <taxon>Brucella/Ochrobactrum group</taxon>
        <taxon>Brucella</taxon>
    </lineage>
</organism>
<gene>
    <name evidence="1" type="primary">rpsJ</name>
    <name type="ordered locus">BruAb1_1239</name>
</gene>
<protein>
    <recommendedName>
        <fullName evidence="1">Small ribosomal subunit protein uS10</fullName>
    </recommendedName>
    <alternativeName>
        <fullName evidence="2">30S ribosomal protein S10</fullName>
    </alternativeName>
</protein>
<accession>Q57CQ7</accession>
<sequence length="102" mass="11628">MNGQNIRIRLKAFDHRILDASTREIVSTAKRTGANVRGPIPLPTRIEKFTVNRSPHIDKKSREQFEMRTHKRLLDIVDPTPQTVDALMKLDLSAGVDVEIKL</sequence>
<name>RS10_BRUAB</name>
<evidence type="ECO:0000255" key="1">
    <source>
        <dbReference type="HAMAP-Rule" id="MF_00508"/>
    </source>
</evidence>
<evidence type="ECO:0000305" key="2"/>
<keyword id="KW-0687">Ribonucleoprotein</keyword>
<keyword id="KW-0689">Ribosomal protein</keyword>